<name>FOLD_MAGMM</name>
<dbReference type="EC" id="1.5.1.5" evidence="1"/>
<dbReference type="EC" id="3.5.4.9" evidence="1"/>
<dbReference type="EMBL" id="CP000471">
    <property type="protein sequence ID" value="ABK46197.1"/>
    <property type="molecule type" value="Genomic_DNA"/>
</dbReference>
<dbReference type="RefSeq" id="WP_011715250.1">
    <property type="nucleotide sequence ID" value="NC_008576.1"/>
</dbReference>
<dbReference type="SMR" id="A0LE04"/>
<dbReference type="STRING" id="156889.Mmc1_3712"/>
<dbReference type="KEGG" id="mgm:Mmc1_3712"/>
<dbReference type="eggNOG" id="COG0190">
    <property type="taxonomic scope" value="Bacteria"/>
</dbReference>
<dbReference type="HOGENOM" id="CLU_034045_2_1_5"/>
<dbReference type="OrthoDB" id="9803580at2"/>
<dbReference type="UniPathway" id="UPA00193"/>
<dbReference type="Proteomes" id="UP000002586">
    <property type="component" value="Chromosome"/>
</dbReference>
<dbReference type="GO" id="GO:0005829">
    <property type="term" value="C:cytosol"/>
    <property type="evidence" value="ECO:0007669"/>
    <property type="project" value="TreeGrafter"/>
</dbReference>
<dbReference type="GO" id="GO:0004477">
    <property type="term" value="F:methenyltetrahydrofolate cyclohydrolase activity"/>
    <property type="evidence" value="ECO:0007669"/>
    <property type="project" value="UniProtKB-UniRule"/>
</dbReference>
<dbReference type="GO" id="GO:0004488">
    <property type="term" value="F:methylenetetrahydrofolate dehydrogenase (NADP+) activity"/>
    <property type="evidence" value="ECO:0007669"/>
    <property type="project" value="UniProtKB-UniRule"/>
</dbReference>
<dbReference type="GO" id="GO:0000105">
    <property type="term" value="P:L-histidine biosynthetic process"/>
    <property type="evidence" value="ECO:0007669"/>
    <property type="project" value="UniProtKB-KW"/>
</dbReference>
<dbReference type="GO" id="GO:0009086">
    <property type="term" value="P:methionine biosynthetic process"/>
    <property type="evidence" value="ECO:0007669"/>
    <property type="project" value="UniProtKB-KW"/>
</dbReference>
<dbReference type="GO" id="GO:0006164">
    <property type="term" value="P:purine nucleotide biosynthetic process"/>
    <property type="evidence" value="ECO:0007669"/>
    <property type="project" value="UniProtKB-KW"/>
</dbReference>
<dbReference type="GO" id="GO:0035999">
    <property type="term" value="P:tetrahydrofolate interconversion"/>
    <property type="evidence" value="ECO:0007669"/>
    <property type="project" value="UniProtKB-UniRule"/>
</dbReference>
<dbReference type="CDD" id="cd01080">
    <property type="entry name" value="NAD_bind_m-THF_DH_Cyclohyd"/>
    <property type="match status" value="1"/>
</dbReference>
<dbReference type="FunFam" id="3.40.50.10860:FF:000001">
    <property type="entry name" value="Bifunctional protein FolD"/>
    <property type="match status" value="1"/>
</dbReference>
<dbReference type="FunFam" id="3.40.50.720:FF:000094">
    <property type="entry name" value="Bifunctional protein FolD"/>
    <property type="match status" value="1"/>
</dbReference>
<dbReference type="Gene3D" id="3.40.50.10860">
    <property type="entry name" value="Leucine Dehydrogenase, chain A, domain 1"/>
    <property type="match status" value="1"/>
</dbReference>
<dbReference type="Gene3D" id="3.40.50.720">
    <property type="entry name" value="NAD(P)-binding Rossmann-like Domain"/>
    <property type="match status" value="1"/>
</dbReference>
<dbReference type="HAMAP" id="MF_01576">
    <property type="entry name" value="THF_DHG_CYH"/>
    <property type="match status" value="1"/>
</dbReference>
<dbReference type="InterPro" id="IPR046346">
    <property type="entry name" value="Aminoacid_DH-like_N_sf"/>
</dbReference>
<dbReference type="InterPro" id="IPR036291">
    <property type="entry name" value="NAD(P)-bd_dom_sf"/>
</dbReference>
<dbReference type="InterPro" id="IPR000672">
    <property type="entry name" value="THF_DH/CycHdrlase"/>
</dbReference>
<dbReference type="InterPro" id="IPR020630">
    <property type="entry name" value="THF_DH/CycHdrlase_cat_dom"/>
</dbReference>
<dbReference type="InterPro" id="IPR020867">
    <property type="entry name" value="THF_DH/CycHdrlase_CS"/>
</dbReference>
<dbReference type="InterPro" id="IPR020631">
    <property type="entry name" value="THF_DH/CycHdrlase_NAD-bd_dom"/>
</dbReference>
<dbReference type="NCBIfam" id="NF008058">
    <property type="entry name" value="PRK10792.1"/>
    <property type="match status" value="1"/>
</dbReference>
<dbReference type="NCBIfam" id="NF010783">
    <property type="entry name" value="PRK14186.1"/>
    <property type="match status" value="1"/>
</dbReference>
<dbReference type="NCBIfam" id="NF010785">
    <property type="entry name" value="PRK14188.1"/>
    <property type="match status" value="1"/>
</dbReference>
<dbReference type="NCBIfam" id="NF010786">
    <property type="entry name" value="PRK14189.1"/>
    <property type="match status" value="1"/>
</dbReference>
<dbReference type="PANTHER" id="PTHR48099:SF5">
    <property type="entry name" value="C-1-TETRAHYDROFOLATE SYNTHASE, CYTOPLASMIC"/>
    <property type="match status" value="1"/>
</dbReference>
<dbReference type="PANTHER" id="PTHR48099">
    <property type="entry name" value="C-1-TETRAHYDROFOLATE SYNTHASE, CYTOPLASMIC-RELATED"/>
    <property type="match status" value="1"/>
</dbReference>
<dbReference type="Pfam" id="PF00763">
    <property type="entry name" value="THF_DHG_CYH"/>
    <property type="match status" value="1"/>
</dbReference>
<dbReference type="Pfam" id="PF02882">
    <property type="entry name" value="THF_DHG_CYH_C"/>
    <property type="match status" value="1"/>
</dbReference>
<dbReference type="PRINTS" id="PR00085">
    <property type="entry name" value="THFDHDRGNASE"/>
</dbReference>
<dbReference type="SUPFAM" id="SSF53223">
    <property type="entry name" value="Aminoacid dehydrogenase-like, N-terminal domain"/>
    <property type="match status" value="1"/>
</dbReference>
<dbReference type="SUPFAM" id="SSF51735">
    <property type="entry name" value="NAD(P)-binding Rossmann-fold domains"/>
    <property type="match status" value="1"/>
</dbReference>
<dbReference type="PROSITE" id="PS00766">
    <property type="entry name" value="THF_DHG_CYH_1"/>
    <property type="match status" value="1"/>
</dbReference>
<dbReference type="PROSITE" id="PS00767">
    <property type="entry name" value="THF_DHG_CYH_2"/>
    <property type="match status" value="1"/>
</dbReference>
<keyword id="KW-0028">Amino-acid biosynthesis</keyword>
<keyword id="KW-0368">Histidine biosynthesis</keyword>
<keyword id="KW-0378">Hydrolase</keyword>
<keyword id="KW-0486">Methionine biosynthesis</keyword>
<keyword id="KW-0511">Multifunctional enzyme</keyword>
<keyword id="KW-0521">NADP</keyword>
<keyword id="KW-0554">One-carbon metabolism</keyword>
<keyword id="KW-0560">Oxidoreductase</keyword>
<keyword id="KW-0658">Purine biosynthesis</keyword>
<keyword id="KW-1185">Reference proteome</keyword>
<evidence type="ECO:0000255" key="1">
    <source>
        <dbReference type="HAMAP-Rule" id="MF_01576"/>
    </source>
</evidence>
<accession>A0LE04</accession>
<organism>
    <name type="scientific">Magnetococcus marinus (strain ATCC BAA-1437 / JCM 17883 / MC-1)</name>
    <dbReference type="NCBI Taxonomy" id="156889"/>
    <lineage>
        <taxon>Bacteria</taxon>
        <taxon>Pseudomonadati</taxon>
        <taxon>Pseudomonadota</taxon>
        <taxon>Alphaproteobacteria</taxon>
        <taxon>Magnetococcales</taxon>
        <taxon>Magnetococcaceae</taxon>
        <taxon>Magnetococcus</taxon>
    </lineage>
</organism>
<comment type="function">
    <text evidence="1">Catalyzes the oxidation of 5,10-methylenetetrahydrofolate to 5,10-methenyltetrahydrofolate and then the hydrolysis of 5,10-methenyltetrahydrofolate to 10-formyltetrahydrofolate.</text>
</comment>
<comment type="catalytic activity">
    <reaction evidence="1">
        <text>(6R)-5,10-methylene-5,6,7,8-tetrahydrofolate + NADP(+) = (6R)-5,10-methenyltetrahydrofolate + NADPH</text>
        <dbReference type="Rhea" id="RHEA:22812"/>
        <dbReference type="ChEBI" id="CHEBI:15636"/>
        <dbReference type="ChEBI" id="CHEBI:57455"/>
        <dbReference type="ChEBI" id="CHEBI:57783"/>
        <dbReference type="ChEBI" id="CHEBI:58349"/>
        <dbReference type="EC" id="1.5.1.5"/>
    </reaction>
</comment>
<comment type="catalytic activity">
    <reaction evidence="1">
        <text>(6R)-5,10-methenyltetrahydrofolate + H2O = (6R)-10-formyltetrahydrofolate + H(+)</text>
        <dbReference type="Rhea" id="RHEA:23700"/>
        <dbReference type="ChEBI" id="CHEBI:15377"/>
        <dbReference type="ChEBI" id="CHEBI:15378"/>
        <dbReference type="ChEBI" id="CHEBI:57455"/>
        <dbReference type="ChEBI" id="CHEBI:195366"/>
        <dbReference type="EC" id="3.5.4.9"/>
    </reaction>
</comment>
<comment type="pathway">
    <text evidence="1">One-carbon metabolism; tetrahydrofolate interconversion.</text>
</comment>
<comment type="subunit">
    <text evidence="1">Homodimer.</text>
</comment>
<comment type="similarity">
    <text evidence="1">Belongs to the tetrahydrofolate dehydrogenase/cyclohydrolase family.</text>
</comment>
<proteinExistence type="inferred from homology"/>
<feature type="chain" id="PRO_0000305839" description="Bifunctional protein FolD">
    <location>
        <begin position="1"/>
        <end position="285"/>
    </location>
</feature>
<feature type="binding site" evidence="1">
    <location>
        <begin position="165"/>
        <end position="167"/>
    </location>
    <ligand>
        <name>NADP(+)</name>
        <dbReference type="ChEBI" id="CHEBI:58349"/>
    </ligand>
</feature>
<feature type="binding site" evidence="1">
    <location>
        <position position="190"/>
    </location>
    <ligand>
        <name>NADP(+)</name>
        <dbReference type="ChEBI" id="CHEBI:58349"/>
    </ligand>
</feature>
<feature type="binding site" evidence="1">
    <location>
        <position position="231"/>
    </location>
    <ligand>
        <name>NADP(+)</name>
        <dbReference type="ChEBI" id="CHEBI:58349"/>
    </ligand>
</feature>
<protein>
    <recommendedName>
        <fullName evidence="1">Bifunctional protein FolD</fullName>
    </recommendedName>
    <domain>
        <recommendedName>
            <fullName evidence="1">Methylenetetrahydrofolate dehydrogenase</fullName>
            <ecNumber evidence="1">1.5.1.5</ecNumber>
        </recommendedName>
    </domain>
    <domain>
        <recommendedName>
            <fullName evidence="1">Methenyltetrahydrofolate cyclohydrolase</fullName>
            <ecNumber evidence="1">3.5.4.9</ecNumber>
        </recommendedName>
    </domain>
</protein>
<sequence length="285" mass="30237">MAHVIDGKAIAQSVREELRMEVERLKLNHQLTPGLAVVLVGADPASQVYVRNKKRACETAGIASFSHELAATTSQAELLALIEQLNQDDAVHGILVQLPLPKHIDEQKVLEAISPSKDADGFHPYNVGRLVTGDPTFQPCTPWGVMEMLKVSGVDPKGKHAVVIGRSNIVGKPVALMLLAAHATVTICHSRTPDLAETVKRADIVVAAVGRANMVPGSWIKKGAVVIDVGINRGEDGKLCGDVDYASCFEHASAITPVPGGVGPMTIAMLLKNTVEGAKRAHNIA</sequence>
<gene>
    <name evidence="1" type="primary">folD</name>
    <name type="ordered locus">Mmc1_3712</name>
</gene>
<reference key="1">
    <citation type="journal article" date="2009" name="Appl. Environ. Microbiol.">
        <title>Complete genome sequence of the chemolithoautotrophic marine magnetotactic coccus strain MC-1.</title>
        <authorList>
            <person name="Schubbe S."/>
            <person name="Williams T.J."/>
            <person name="Xie G."/>
            <person name="Kiss H.E."/>
            <person name="Brettin T.S."/>
            <person name="Martinez D."/>
            <person name="Ross C.A."/>
            <person name="Schuler D."/>
            <person name="Cox B.L."/>
            <person name="Nealson K.H."/>
            <person name="Bazylinski D.A."/>
        </authorList>
    </citation>
    <scope>NUCLEOTIDE SEQUENCE [LARGE SCALE GENOMIC DNA]</scope>
    <source>
        <strain>ATCC BAA-1437 / JCM 17883 / MC-1</strain>
    </source>
</reference>